<organism>
    <name type="scientific">Cricetulus griseus</name>
    <name type="common">Chinese hamster</name>
    <name type="synonym">Cricetulus barabensis griseus</name>
    <dbReference type="NCBI Taxonomy" id="10029"/>
    <lineage>
        <taxon>Eukaryota</taxon>
        <taxon>Metazoa</taxon>
        <taxon>Chordata</taxon>
        <taxon>Craniata</taxon>
        <taxon>Vertebrata</taxon>
        <taxon>Euteleostomi</taxon>
        <taxon>Mammalia</taxon>
        <taxon>Eutheria</taxon>
        <taxon>Euarchontoglires</taxon>
        <taxon>Glires</taxon>
        <taxon>Rodentia</taxon>
        <taxon>Myomorpha</taxon>
        <taxon>Muroidea</taxon>
        <taxon>Cricetidae</taxon>
        <taxon>Cricetinae</taxon>
        <taxon>Cricetulus</taxon>
    </lineage>
</organism>
<sequence>MSWARTHLRSALSLAAVSARGATTEGAARRWLSAWPAPQEPGMEYQDAVRMLNTLQTNASYLEQVKRQRSDPQAQLEAMEVYLARSGLQVEDLNQLNIIHVTGTKGKGSTCAFTERILRSYGLKTGFFSSPHLVQVRERIRINGKPISPELFTKHFWRLYHQLEEFKDDSHVAMPAYFRFLTLMAFHVFLQEKVDLAVVEVGIGGAYDCTNIIRKPVVCGVSSLGMDHTSLLGDTVEKIAWQKGGIFKPGVPAFTVLQPEGPLAVLRDRAQQTSCPLYLCPPLEALEDGGLPLTLGLEGEHQRSNAALALQLAHCWLEQQDHQDIRELKVSRPSMRWQLPLAPVFHPTSHMRHGLRDTEWPGRTQVLRRGPLTWYLDGAHTTSSVQACVRWYCQSLQRSKHPSGGPEVYVLLFNSTGDRDSAALLKLLQPCQFDYAVFCPNLTEVSSTENADQQNFTVTLDQVLLRCLQHQQHWSCLSEKQASPDFLSSPSPEPGRPGSLQPALRPPHSTGTNSLVFSCISHALQWISQGRDPIFQAPSPPRSLLSHPTASSGASILREAGAIHVLVTGSLHLVGGVLKLLEPSLSQ</sequence>
<name>FOLC_CRIGR</name>
<evidence type="ECO:0000250" key="1"/>
<evidence type="ECO:0000250" key="2">
    <source>
        <dbReference type="UniProtKB" id="P08192"/>
    </source>
</evidence>
<evidence type="ECO:0000250" key="3">
    <source>
        <dbReference type="UniProtKB" id="Q05932"/>
    </source>
</evidence>
<evidence type="ECO:0000256" key="4">
    <source>
        <dbReference type="SAM" id="MobiDB-lite"/>
    </source>
</evidence>
<evidence type="ECO:0000269" key="5">
    <source ref="1"/>
</evidence>
<evidence type="ECO:0000305" key="6"/>
<keyword id="KW-0024">Alternative initiation</keyword>
<keyword id="KW-0067">ATP-binding</keyword>
<keyword id="KW-0963">Cytoplasm</keyword>
<keyword id="KW-0436">Ligase</keyword>
<keyword id="KW-0460">Magnesium</keyword>
<keyword id="KW-0472">Membrane</keyword>
<keyword id="KW-0479">Metal-binding</keyword>
<keyword id="KW-0496">Mitochondrion</keyword>
<keyword id="KW-0999">Mitochondrion inner membrane</keyword>
<keyword id="KW-0547">Nucleotide-binding</keyword>
<keyword id="KW-0554">One-carbon metabolism</keyword>
<keyword id="KW-0597">Phosphoprotein</keyword>
<keyword id="KW-0809">Transit peptide</keyword>
<feature type="transit peptide" description="Mitochondrion" evidence="1">
    <location>
        <begin position="1"/>
        <end position="42"/>
    </location>
</feature>
<feature type="chain" id="PRO_5000058419" description="Folylpolyglutamate synthase, mitochondrial">
    <location>
        <begin position="43"/>
        <end position="587"/>
    </location>
</feature>
<feature type="region of interest" description="Disordered" evidence="4">
    <location>
        <begin position="484"/>
        <end position="508"/>
    </location>
</feature>
<feature type="binding site" evidence="2">
    <location>
        <begin position="106"/>
        <end position="109"/>
    </location>
    <ligand>
        <name>ATP</name>
        <dbReference type="ChEBI" id="CHEBI:30616"/>
    </ligand>
</feature>
<feature type="binding site" evidence="2">
    <location>
        <position position="130"/>
    </location>
    <ligand>
        <name>Mg(2+)</name>
        <dbReference type="ChEBI" id="CHEBI:18420"/>
        <label>1</label>
    </ligand>
</feature>
<feature type="binding site" evidence="2">
    <location>
        <position position="200"/>
    </location>
    <ligand>
        <name>Mg(2+)</name>
        <dbReference type="ChEBI" id="CHEBI:18420"/>
        <label>1</label>
    </ligand>
</feature>
<feature type="binding site" evidence="2">
    <location>
        <position position="228"/>
    </location>
    <ligand>
        <name>Mg(2+)</name>
        <dbReference type="ChEBI" id="CHEBI:18420"/>
        <label>2</label>
    </ligand>
</feature>
<feature type="binding site" evidence="2">
    <location>
        <position position="363"/>
    </location>
    <ligand>
        <name>ATP</name>
        <dbReference type="ChEBI" id="CHEBI:30616"/>
    </ligand>
</feature>
<feature type="binding site" evidence="2">
    <location>
        <position position="377"/>
    </location>
    <ligand>
        <name>ATP</name>
        <dbReference type="ChEBI" id="CHEBI:30616"/>
    </ligand>
</feature>
<feature type="modified residue" description="Phosphoserine" evidence="3">
    <location>
        <position position="539"/>
    </location>
</feature>
<feature type="splice variant" id="VSP_041958" description="In isoform 2." evidence="6">
    <location>
        <begin position="1"/>
        <end position="42"/>
    </location>
</feature>
<feature type="sequence variant" evidence="5">
    <original>A</original>
    <variation>S</variation>
    <location>
        <position position="173"/>
    </location>
</feature>
<feature type="sequence variant" evidence="5">
    <original>Q</original>
    <variation>E</variation>
    <location>
        <position position="536"/>
    </location>
</feature>
<gene>
    <name type="primary">FPGS</name>
</gene>
<reference key="1">
    <citation type="submission" date="2000-06" db="EMBL/GenBank/DDBJ databases">
        <title>Mutations causative of GAT class of somatic cell auxotrophs.</title>
        <authorList>
            <person name="Titus S.A. Jr."/>
            <person name="Fergeson J."/>
            <person name="Moran R.G."/>
        </authorList>
    </citation>
    <scope>NUCLEOTIDE SEQUENCE [MRNA] (ISOFORM 1)</scope>
    <scope>VARIANTS SER-173 AND GLU-536</scope>
    <source>
        <tissue>Kidney</tissue>
        <tissue>Lung</tissue>
    </source>
</reference>
<reference key="2">
    <citation type="journal article" date="1995" name="J. Biol. Chem.">
        <title>Upstream organization of and multiple transcripts from the human folylpoly-gamma-glutamate synthetase gene.</title>
        <authorList>
            <person name="Freemantle S.J."/>
            <person name="Taylor S.M."/>
            <person name="Krystal G."/>
            <person name="Moran R.G."/>
        </authorList>
    </citation>
    <scope>NUCLEOTIDE SEQUENCE [MRNA] OF 1-70 (ISOFORM 1)</scope>
    <scope>ALTERNATIVE INITIATION</scope>
    <source>
        <tissue>Ovary</tissue>
    </source>
</reference>
<proteinExistence type="evidence at transcript level"/>
<comment type="function">
    <text evidence="1">Catalyzes conversion of folates to polyglutamate derivatives allowing concentration of folate compounds in the cell and the intracellular retention of these cofactors, which are important substrates for most of the folate-dependent enzymes that are involved in one-carbon transfer reactions involved in purine, pyrimidine and amino acid synthesis.</text>
</comment>
<comment type="catalytic activity">
    <reaction>
        <text>(6S)-5,6,7,8-tetrahydrofolyl-(gamma-L-Glu)(n) + L-glutamate + ATP = (6S)-5,6,7,8-tetrahydrofolyl-(gamma-L-Glu)(n+1) + ADP + phosphate + H(+)</text>
        <dbReference type="Rhea" id="RHEA:10580"/>
        <dbReference type="Rhea" id="RHEA-COMP:14738"/>
        <dbReference type="Rhea" id="RHEA-COMP:14740"/>
        <dbReference type="ChEBI" id="CHEBI:15378"/>
        <dbReference type="ChEBI" id="CHEBI:29985"/>
        <dbReference type="ChEBI" id="CHEBI:30616"/>
        <dbReference type="ChEBI" id="CHEBI:43474"/>
        <dbReference type="ChEBI" id="CHEBI:141005"/>
        <dbReference type="ChEBI" id="CHEBI:456216"/>
        <dbReference type="EC" id="6.3.2.17"/>
    </reaction>
</comment>
<comment type="cofactor">
    <cofactor evidence="1">
        <name>a monovalent cation</name>
        <dbReference type="ChEBI" id="CHEBI:60242"/>
    </cofactor>
    <text evidence="1">A monovalent cation.</text>
</comment>
<comment type="pathway">
    <text>Cofactor biosynthesis; tetrahydrofolylpolyglutamate biosynthesis.</text>
</comment>
<comment type="subunit">
    <text evidence="1">Monomer.</text>
</comment>
<comment type="subcellular location">
    <molecule>Isoform 1</molecule>
    <subcellularLocation>
        <location evidence="3">Mitochondrion inner membrane</location>
    </subcellularLocation>
    <subcellularLocation>
        <location evidence="3">Mitochondrion matrix</location>
    </subcellularLocation>
</comment>
<comment type="subcellular location">
    <molecule>Isoform 2</molecule>
    <subcellularLocation>
        <location evidence="3">Cytoplasm</location>
    </subcellularLocation>
</comment>
<comment type="alternative products">
    <event type="alternative initiation"/>
    <isoform>
        <id>Q924L9-1</id>
        <name>1</name>
        <name>Mitochondrial</name>
        <sequence type="displayed"/>
    </isoform>
    <isoform>
        <id>Q924L9-2</id>
        <name>2</name>
        <name>Cytoplasmic</name>
        <sequence type="described" ref="VSP_041958"/>
    </isoform>
</comment>
<comment type="similarity">
    <text evidence="6">Belongs to the folylpolyglutamate synthase family.</text>
</comment>
<accession>Q924L9</accession>
<accession>Q64394</accession>
<accession>Q91XR4</accession>
<dbReference type="EC" id="6.3.2.17"/>
<dbReference type="EMBL" id="AF283646">
    <property type="protein sequence ID" value="AAK69545.1"/>
    <property type="molecule type" value="mRNA"/>
</dbReference>
<dbReference type="EMBL" id="AF283647">
    <property type="protein sequence ID" value="AAK69546.1"/>
    <property type="molecule type" value="mRNA"/>
</dbReference>
<dbReference type="EMBL" id="U14938">
    <property type="protein sequence ID" value="AAA85814.1"/>
    <property type="molecule type" value="mRNA"/>
</dbReference>
<dbReference type="RefSeq" id="NP_001230938.1">
    <molecule id="Q924L9-1"/>
    <property type="nucleotide sequence ID" value="NM_001244009.2"/>
</dbReference>
<dbReference type="SMR" id="Q924L9"/>
<dbReference type="PaxDb" id="10029-NP_001230938.1"/>
<dbReference type="GeneID" id="100689022"/>
<dbReference type="KEGG" id="cge:100689022"/>
<dbReference type="CTD" id="2356"/>
<dbReference type="eggNOG" id="KOG2525">
    <property type="taxonomic scope" value="Eukaryota"/>
</dbReference>
<dbReference type="OrthoDB" id="5212574at2759"/>
<dbReference type="BRENDA" id="6.3.2.17">
    <property type="organism ID" value="1309"/>
</dbReference>
<dbReference type="UniPathway" id="UPA00850"/>
<dbReference type="Proteomes" id="UP000694386">
    <property type="component" value="Unplaced"/>
</dbReference>
<dbReference type="Proteomes" id="UP001108280">
    <property type="component" value="Chromosome 6"/>
</dbReference>
<dbReference type="GO" id="GO:0005829">
    <property type="term" value="C:cytosol"/>
    <property type="evidence" value="ECO:0007669"/>
    <property type="project" value="TreeGrafter"/>
</dbReference>
<dbReference type="GO" id="GO:0005743">
    <property type="term" value="C:mitochondrial inner membrane"/>
    <property type="evidence" value="ECO:0007669"/>
    <property type="project" value="UniProtKB-SubCell"/>
</dbReference>
<dbReference type="GO" id="GO:0005759">
    <property type="term" value="C:mitochondrial matrix"/>
    <property type="evidence" value="ECO:0007669"/>
    <property type="project" value="UniProtKB-SubCell"/>
</dbReference>
<dbReference type="GO" id="GO:0005524">
    <property type="term" value="F:ATP binding"/>
    <property type="evidence" value="ECO:0007669"/>
    <property type="project" value="UniProtKB-KW"/>
</dbReference>
<dbReference type="GO" id="GO:0046872">
    <property type="term" value="F:metal ion binding"/>
    <property type="evidence" value="ECO:0007669"/>
    <property type="project" value="UniProtKB-KW"/>
</dbReference>
<dbReference type="GO" id="GO:0004326">
    <property type="term" value="F:tetrahydrofolylpolyglutamate synthase activity"/>
    <property type="evidence" value="ECO:0007669"/>
    <property type="project" value="UniProtKB-EC"/>
</dbReference>
<dbReference type="GO" id="GO:0006730">
    <property type="term" value="P:one-carbon metabolic process"/>
    <property type="evidence" value="ECO:0007669"/>
    <property type="project" value="UniProtKB-KW"/>
</dbReference>
<dbReference type="FunFam" id="3.40.1190.10:FF:000005">
    <property type="entry name" value="Folylpolyglutamate synthase"/>
    <property type="match status" value="1"/>
</dbReference>
<dbReference type="FunFam" id="3.90.190.20:FF:000007">
    <property type="entry name" value="Folylpolyglutamate synthase"/>
    <property type="match status" value="1"/>
</dbReference>
<dbReference type="Gene3D" id="3.90.190.20">
    <property type="entry name" value="Mur ligase, C-terminal domain"/>
    <property type="match status" value="1"/>
</dbReference>
<dbReference type="Gene3D" id="3.40.1190.10">
    <property type="entry name" value="Mur-like, catalytic domain"/>
    <property type="match status" value="1"/>
</dbReference>
<dbReference type="InterPro" id="IPR001645">
    <property type="entry name" value="Folylpolyglutamate_synth"/>
</dbReference>
<dbReference type="InterPro" id="IPR018109">
    <property type="entry name" value="Folylpolyglutamate_synth_CS"/>
</dbReference>
<dbReference type="InterPro" id="IPR023600">
    <property type="entry name" value="Folylpolyglutamate_synth_euk"/>
</dbReference>
<dbReference type="InterPro" id="IPR036565">
    <property type="entry name" value="Mur-like_cat_sf"/>
</dbReference>
<dbReference type="InterPro" id="IPR036615">
    <property type="entry name" value="Mur_ligase_C_dom_sf"/>
</dbReference>
<dbReference type="NCBIfam" id="TIGR01499">
    <property type="entry name" value="folC"/>
    <property type="match status" value="1"/>
</dbReference>
<dbReference type="PANTHER" id="PTHR11136:SF5">
    <property type="entry name" value="FOLYLPOLYGLUTAMATE SYNTHASE, MITOCHONDRIAL"/>
    <property type="match status" value="1"/>
</dbReference>
<dbReference type="PANTHER" id="PTHR11136">
    <property type="entry name" value="FOLYLPOLYGLUTAMATE SYNTHASE-RELATED"/>
    <property type="match status" value="1"/>
</dbReference>
<dbReference type="PIRSF" id="PIRSF038895">
    <property type="entry name" value="FPGS"/>
    <property type="match status" value="1"/>
</dbReference>
<dbReference type="SUPFAM" id="SSF53623">
    <property type="entry name" value="MurD-like peptide ligases, catalytic domain"/>
    <property type="match status" value="1"/>
</dbReference>
<dbReference type="SUPFAM" id="SSF53244">
    <property type="entry name" value="MurD-like peptide ligases, peptide-binding domain"/>
    <property type="match status" value="1"/>
</dbReference>
<dbReference type="PROSITE" id="PS01011">
    <property type="entry name" value="FOLYLPOLYGLU_SYNT_1"/>
    <property type="match status" value="1"/>
</dbReference>
<dbReference type="PROSITE" id="PS01012">
    <property type="entry name" value="FOLYLPOLYGLU_SYNT_2"/>
    <property type="match status" value="1"/>
</dbReference>
<protein>
    <recommendedName>
        <fullName>Folylpolyglutamate synthase, mitochondrial</fullName>
        <ecNumber>6.3.2.17</ecNumber>
    </recommendedName>
    <alternativeName>
        <fullName>Folylpoly-gamma-glutamate synthetase</fullName>
        <shortName>FPGS</shortName>
    </alternativeName>
    <alternativeName>
        <fullName>Tetrahydrofolate synthase</fullName>
    </alternativeName>
    <alternativeName>
        <fullName>Tetrahydrofolylpolyglutamate synthase</fullName>
    </alternativeName>
</protein>